<proteinExistence type="inferred from homology"/>
<keyword id="KW-0687">Ribonucleoprotein</keyword>
<keyword id="KW-0689">Ribosomal protein</keyword>
<keyword id="KW-0694">RNA-binding</keyword>
<keyword id="KW-0699">rRNA-binding</keyword>
<dbReference type="EMBL" id="CP000679">
    <property type="protein sequence ID" value="ABP67865.1"/>
    <property type="molecule type" value="Genomic_DNA"/>
</dbReference>
<dbReference type="RefSeq" id="WP_011917791.1">
    <property type="nucleotide sequence ID" value="NC_009437.1"/>
</dbReference>
<dbReference type="SMR" id="A4XLT0"/>
<dbReference type="STRING" id="351627.Csac_2287"/>
<dbReference type="KEGG" id="csc:Csac_2287"/>
<dbReference type="eggNOG" id="COG0087">
    <property type="taxonomic scope" value="Bacteria"/>
</dbReference>
<dbReference type="HOGENOM" id="CLU_044142_4_1_9"/>
<dbReference type="OrthoDB" id="9806135at2"/>
<dbReference type="Proteomes" id="UP000000256">
    <property type="component" value="Chromosome"/>
</dbReference>
<dbReference type="GO" id="GO:0022625">
    <property type="term" value="C:cytosolic large ribosomal subunit"/>
    <property type="evidence" value="ECO:0007669"/>
    <property type="project" value="TreeGrafter"/>
</dbReference>
<dbReference type="GO" id="GO:0019843">
    <property type="term" value="F:rRNA binding"/>
    <property type="evidence" value="ECO:0007669"/>
    <property type="project" value="UniProtKB-UniRule"/>
</dbReference>
<dbReference type="GO" id="GO:0003735">
    <property type="term" value="F:structural constituent of ribosome"/>
    <property type="evidence" value="ECO:0007669"/>
    <property type="project" value="InterPro"/>
</dbReference>
<dbReference type="GO" id="GO:0006412">
    <property type="term" value="P:translation"/>
    <property type="evidence" value="ECO:0007669"/>
    <property type="project" value="UniProtKB-UniRule"/>
</dbReference>
<dbReference type="FunFam" id="2.40.30.10:FF:000004">
    <property type="entry name" value="50S ribosomal protein L3"/>
    <property type="match status" value="1"/>
</dbReference>
<dbReference type="FunFam" id="3.30.160.810:FF:000001">
    <property type="entry name" value="50S ribosomal protein L3"/>
    <property type="match status" value="1"/>
</dbReference>
<dbReference type="Gene3D" id="3.30.160.810">
    <property type="match status" value="1"/>
</dbReference>
<dbReference type="Gene3D" id="2.40.30.10">
    <property type="entry name" value="Translation factors"/>
    <property type="match status" value="1"/>
</dbReference>
<dbReference type="HAMAP" id="MF_01325_B">
    <property type="entry name" value="Ribosomal_uL3_B"/>
    <property type="match status" value="1"/>
</dbReference>
<dbReference type="InterPro" id="IPR000597">
    <property type="entry name" value="Ribosomal_uL3"/>
</dbReference>
<dbReference type="InterPro" id="IPR019927">
    <property type="entry name" value="Ribosomal_uL3_bac/org-type"/>
</dbReference>
<dbReference type="InterPro" id="IPR009000">
    <property type="entry name" value="Transl_B-barrel_sf"/>
</dbReference>
<dbReference type="NCBIfam" id="TIGR03625">
    <property type="entry name" value="L3_bact"/>
    <property type="match status" value="1"/>
</dbReference>
<dbReference type="PANTHER" id="PTHR11229">
    <property type="entry name" value="50S RIBOSOMAL PROTEIN L3"/>
    <property type="match status" value="1"/>
</dbReference>
<dbReference type="PANTHER" id="PTHR11229:SF16">
    <property type="entry name" value="LARGE RIBOSOMAL SUBUNIT PROTEIN UL3C"/>
    <property type="match status" value="1"/>
</dbReference>
<dbReference type="Pfam" id="PF00297">
    <property type="entry name" value="Ribosomal_L3"/>
    <property type="match status" value="1"/>
</dbReference>
<dbReference type="SUPFAM" id="SSF50447">
    <property type="entry name" value="Translation proteins"/>
    <property type="match status" value="1"/>
</dbReference>
<sequence>MTKGILGKKIGMTQVFDEAGKVVPVTVIEAGPCVVVQKKTVEKDGYAAIQVGFEDIKETKLNKPLRGHFAKHGVKPKRYLRELRLKDADKYEVGQEIRVDIFSPGERVDVTGISKAKGFQGVIKRHGQQRGPMSHGSMYHRRVGSMGSNTFPARTFPGKKMPGRMGGQRVTVLNLQVVKVDPERNLLLVKGSVPGNKNSLLIIRDSVKSK</sequence>
<gene>
    <name evidence="1" type="primary">rplC</name>
    <name type="ordered locus">Csac_2287</name>
</gene>
<name>RL3_CALS8</name>
<comment type="function">
    <text evidence="1">One of the primary rRNA binding proteins, it binds directly near the 3'-end of the 23S rRNA, where it nucleates assembly of the 50S subunit.</text>
</comment>
<comment type="subunit">
    <text evidence="1">Part of the 50S ribosomal subunit. Forms a cluster with proteins L14 and L19.</text>
</comment>
<comment type="similarity">
    <text evidence="1">Belongs to the universal ribosomal protein uL3 family.</text>
</comment>
<evidence type="ECO:0000255" key="1">
    <source>
        <dbReference type="HAMAP-Rule" id="MF_01325"/>
    </source>
</evidence>
<evidence type="ECO:0000305" key="2"/>
<accession>A4XLT0</accession>
<feature type="chain" id="PRO_1000052028" description="Large ribosomal subunit protein uL3">
    <location>
        <begin position="1"/>
        <end position="210"/>
    </location>
</feature>
<protein>
    <recommendedName>
        <fullName evidence="1">Large ribosomal subunit protein uL3</fullName>
    </recommendedName>
    <alternativeName>
        <fullName evidence="2">50S ribosomal protein L3</fullName>
    </alternativeName>
</protein>
<organism>
    <name type="scientific">Caldicellulosiruptor saccharolyticus (strain ATCC 43494 / DSM 8903 / Tp8T 6331)</name>
    <dbReference type="NCBI Taxonomy" id="351627"/>
    <lineage>
        <taxon>Bacteria</taxon>
        <taxon>Bacillati</taxon>
        <taxon>Bacillota</taxon>
        <taxon>Bacillota incertae sedis</taxon>
        <taxon>Caldicellulosiruptorales</taxon>
        <taxon>Caldicellulosiruptoraceae</taxon>
        <taxon>Caldicellulosiruptor</taxon>
    </lineage>
</organism>
<reference key="1">
    <citation type="submission" date="2007-04" db="EMBL/GenBank/DDBJ databases">
        <title>Genome sequence of the thermophilic hydrogen-producing bacterium Caldicellulosiruptor saccharolyticus DSM 8903.</title>
        <authorList>
            <person name="Copeland A."/>
            <person name="Lucas S."/>
            <person name="Lapidus A."/>
            <person name="Barry K."/>
            <person name="Detter J.C."/>
            <person name="Glavina del Rio T."/>
            <person name="Hammon N."/>
            <person name="Israni S."/>
            <person name="Dalin E."/>
            <person name="Tice H."/>
            <person name="Pitluck S."/>
            <person name="Kiss H."/>
            <person name="Brettin T."/>
            <person name="Bruce D."/>
            <person name="Han C."/>
            <person name="Schmutz J."/>
            <person name="Larimer F."/>
            <person name="Land M."/>
            <person name="Hauser L."/>
            <person name="Kyrpides N."/>
            <person name="Lykidis A."/>
            <person name="van de Werken H.J.G."/>
            <person name="Verhaart M.R.A."/>
            <person name="VanFossen A.L."/>
            <person name="Lewis D.L."/>
            <person name="Nichols J.D."/>
            <person name="Goorissen H.P."/>
            <person name="van Niel E.W.J."/>
            <person name="Stams F.J.M."/>
            <person name="Willquist K.U."/>
            <person name="Ward D.E."/>
            <person name="van der Oost J."/>
            <person name="Kelly R.M."/>
            <person name="Kengen S.M.W."/>
            <person name="Richardson P."/>
        </authorList>
    </citation>
    <scope>NUCLEOTIDE SEQUENCE [LARGE SCALE GENOMIC DNA]</scope>
    <source>
        <strain>ATCC 43494 / DSM 8903 / Tp8T 6331</strain>
    </source>
</reference>